<comment type="function">
    <text evidence="1">Component of the exocyst complex involved in the docking of exocytic vesicles with fusion sites on the plasma membrane.</text>
</comment>
<comment type="subunit">
    <text evidence="1">Component of the exocyst complex.</text>
</comment>
<comment type="subcellular location">
    <subcellularLocation>
        <location evidence="3">Cytoplasm</location>
    </subcellularLocation>
    <text>Localized at the cell tip and barrier septum.</text>
</comment>
<comment type="similarity">
    <text evidence="5">Belongs to the SEC5 family.</text>
</comment>
<proteinExistence type="evidence at protein level"/>
<name>SEC5_SCHPO</name>
<organism>
    <name type="scientific">Schizosaccharomyces pombe (strain 972 / ATCC 24843)</name>
    <name type="common">Fission yeast</name>
    <dbReference type="NCBI Taxonomy" id="284812"/>
    <lineage>
        <taxon>Eukaryota</taxon>
        <taxon>Fungi</taxon>
        <taxon>Dikarya</taxon>
        <taxon>Ascomycota</taxon>
        <taxon>Taphrinomycotina</taxon>
        <taxon>Schizosaccharomycetes</taxon>
        <taxon>Schizosaccharomycetales</taxon>
        <taxon>Schizosaccharomycetaceae</taxon>
        <taxon>Schizosaccharomyces</taxon>
    </lineage>
</organism>
<gene>
    <name type="primary">sec5</name>
    <name type="ORF">SPCC622.10c</name>
</gene>
<protein>
    <recommendedName>
        <fullName>Exocyst complex component sec5</fullName>
    </recommendedName>
</protein>
<feature type="chain" id="PRO_0000374043" description="Exocyst complex component sec5">
    <location>
        <begin position="1"/>
        <end position="815"/>
    </location>
</feature>
<feature type="region of interest" description="Disordered" evidence="2">
    <location>
        <begin position="37"/>
        <end position="74"/>
    </location>
</feature>
<feature type="compositionally biased region" description="Basic and acidic residues" evidence="2">
    <location>
        <begin position="43"/>
        <end position="54"/>
    </location>
</feature>
<feature type="modified residue" description="Phosphoserine" evidence="4">
    <location>
        <position position="50"/>
    </location>
</feature>
<sequence length="815" mass="92711">MSADEEILAHYGLTSLSQDYWTEKPDFAIANASVDVQSPTTGVHHERNRSEDILRTGGATSETTKDASAAGPVTPSFAMKRSQTSVQPSMSSQIAIGGMRNPMATRKIAGTYRDAPDNSMQQTSTGVHRSSSWLTTDGTHQLLSLMETNFNKFIAAKETIDNVYAQIISTLSHAGPAKTMDMCEESISGALQQLQLFNTESTNEVDISYGELLVMRECEALFTYPEKFRLYHKQEKYSLLMQEIENAKKLYEKDRERLAKVNPKLVYLVDHAWEIIQATIDGICASIWNQILQSQGDFAFVVRTLCDLLKLKPNPISGRDPVLYATVSQQKYLYNLMKERFSYFEKIIKSRQEDFSKLSCTRASPMLVWRAVARGCNLDYTLRGRPEVFAGMQLIEWANACVLKIVREIKEVELYAKEFISGIQQASYPEAAKHYGRDPKQMGVVVEKLNSQCLEMVYSFVGERGERLEMDGAFVLIQLHYFQRVADLLPKRIRTVFSMAATRCIVDTWMLQHAPQSKSANIEEMFIVDANENQVLEPELMVVDVLRELNKLYIPPHREEIVREIHHAFYKVLYANARFPSMSVSMANWESDVWSLASSTLIDFVQHRNQHDMKKLASKMTTSLPVFSTSITRSDVLHFVTRLLNLRSRLVPYQKFLLQTFPLNEVSPSLDPRISKSLRNLQDLYKLLAIRDTSFSNTTPSSISKLSIQPPTFQLFSTLETIYLELKDSMPPNEAADWMIATTSCMLAQFALHSPYAFFHDIPSISHFLNKCLPPTILDLLQQIQRKAEASSISPTTETATKTRLKFQFIEMIFS</sequence>
<dbReference type="EMBL" id="CU329672">
    <property type="protein sequence ID" value="CAA21866.1"/>
    <property type="molecule type" value="Genomic_DNA"/>
</dbReference>
<dbReference type="PIR" id="T41490">
    <property type="entry name" value="T41490"/>
</dbReference>
<dbReference type="RefSeq" id="NP_588182.1">
    <property type="nucleotide sequence ID" value="NM_001023172.2"/>
</dbReference>
<dbReference type="BioGRID" id="275907">
    <property type="interactions" value="2"/>
</dbReference>
<dbReference type="FunCoup" id="O94598">
    <property type="interactions" value="7"/>
</dbReference>
<dbReference type="STRING" id="284812.O94598"/>
<dbReference type="iPTMnet" id="O94598"/>
<dbReference type="PaxDb" id="4896-SPCC622.10c.1"/>
<dbReference type="EnsemblFungi" id="SPCC622.10c.1">
    <property type="protein sequence ID" value="SPCC622.10c.1:pep"/>
    <property type="gene ID" value="SPCC622.10c"/>
</dbReference>
<dbReference type="GeneID" id="2539341"/>
<dbReference type="KEGG" id="spo:2539341"/>
<dbReference type="PomBase" id="SPCC622.10c">
    <property type="gene designation" value="sec5"/>
</dbReference>
<dbReference type="VEuPathDB" id="FungiDB:SPCC622.10c"/>
<dbReference type="HOGENOM" id="CLU_336540_0_0_1"/>
<dbReference type="InParanoid" id="O94598"/>
<dbReference type="OMA" id="MQLIEWA"/>
<dbReference type="PRO" id="PR:O94598"/>
<dbReference type="Proteomes" id="UP000002485">
    <property type="component" value="Chromosome III"/>
</dbReference>
<dbReference type="GO" id="GO:0032153">
    <property type="term" value="C:cell division site"/>
    <property type="evidence" value="ECO:0007005"/>
    <property type="project" value="PomBase"/>
</dbReference>
<dbReference type="GO" id="GO:0051286">
    <property type="term" value="C:cell tip"/>
    <property type="evidence" value="ECO:0007005"/>
    <property type="project" value="PomBase"/>
</dbReference>
<dbReference type="GO" id="GO:0000145">
    <property type="term" value="C:exocyst"/>
    <property type="evidence" value="ECO:0000318"/>
    <property type="project" value="GO_Central"/>
</dbReference>
<dbReference type="GO" id="GO:0006887">
    <property type="term" value="P:exocytosis"/>
    <property type="evidence" value="ECO:0000318"/>
    <property type="project" value="GO_Central"/>
</dbReference>
<dbReference type="GO" id="GO:0006893">
    <property type="term" value="P:Golgi to plasma membrane transport"/>
    <property type="evidence" value="ECO:0000318"/>
    <property type="project" value="GO_Central"/>
</dbReference>
<dbReference type="GO" id="GO:0015031">
    <property type="term" value="P:protein transport"/>
    <property type="evidence" value="ECO:0007669"/>
    <property type="project" value="UniProtKB-KW"/>
</dbReference>
<dbReference type="GO" id="GO:0090522">
    <property type="term" value="P:vesicle tethering involved in exocytosis"/>
    <property type="evidence" value="ECO:0000305"/>
    <property type="project" value="PomBase"/>
</dbReference>
<dbReference type="InterPro" id="IPR029175">
    <property type="entry name" value="EXOC2/Sec5"/>
</dbReference>
<dbReference type="InterPro" id="IPR039481">
    <property type="entry name" value="EXOC2/Sec5_N_dom"/>
</dbReference>
<dbReference type="PANTHER" id="PTHR13043:SF1">
    <property type="entry name" value="EXOCYST COMPLEX COMPONENT 2"/>
    <property type="match status" value="1"/>
</dbReference>
<dbReference type="PANTHER" id="PTHR13043">
    <property type="entry name" value="EXOCYST COMPLEX COMPONENT SEC5"/>
    <property type="match status" value="1"/>
</dbReference>
<dbReference type="Pfam" id="PF15469">
    <property type="entry name" value="Sec5"/>
    <property type="match status" value="1"/>
</dbReference>
<reference key="1">
    <citation type="journal article" date="2002" name="Nature">
        <title>The genome sequence of Schizosaccharomyces pombe.</title>
        <authorList>
            <person name="Wood V."/>
            <person name="Gwilliam R."/>
            <person name="Rajandream M.A."/>
            <person name="Lyne M.H."/>
            <person name="Lyne R."/>
            <person name="Stewart A."/>
            <person name="Sgouros J.G."/>
            <person name="Peat N."/>
            <person name="Hayles J."/>
            <person name="Baker S.G."/>
            <person name="Basham D."/>
            <person name="Bowman S."/>
            <person name="Brooks K."/>
            <person name="Brown D."/>
            <person name="Brown S."/>
            <person name="Chillingworth T."/>
            <person name="Churcher C.M."/>
            <person name="Collins M."/>
            <person name="Connor R."/>
            <person name="Cronin A."/>
            <person name="Davis P."/>
            <person name="Feltwell T."/>
            <person name="Fraser A."/>
            <person name="Gentles S."/>
            <person name="Goble A."/>
            <person name="Hamlin N."/>
            <person name="Harris D.E."/>
            <person name="Hidalgo J."/>
            <person name="Hodgson G."/>
            <person name="Holroyd S."/>
            <person name="Hornsby T."/>
            <person name="Howarth S."/>
            <person name="Huckle E.J."/>
            <person name="Hunt S."/>
            <person name="Jagels K."/>
            <person name="James K.D."/>
            <person name="Jones L."/>
            <person name="Jones M."/>
            <person name="Leather S."/>
            <person name="McDonald S."/>
            <person name="McLean J."/>
            <person name="Mooney P."/>
            <person name="Moule S."/>
            <person name="Mungall K.L."/>
            <person name="Murphy L.D."/>
            <person name="Niblett D."/>
            <person name="Odell C."/>
            <person name="Oliver K."/>
            <person name="O'Neil S."/>
            <person name="Pearson D."/>
            <person name="Quail M.A."/>
            <person name="Rabbinowitsch E."/>
            <person name="Rutherford K.M."/>
            <person name="Rutter S."/>
            <person name="Saunders D."/>
            <person name="Seeger K."/>
            <person name="Sharp S."/>
            <person name="Skelton J."/>
            <person name="Simmonds M.N."/>
            <person name="Squares R."/>
            <person name="Squares S."/>
            <person name="Stevens K."/>
            <person name="Taylor K."/>
            <person name="Taylor R.G."/>
            <person name="Tivey A."/>
            <person name="Walsh S.V."/>
            <person name="Warren T."/>
            <person name="Whitehead S."/>
            <person name="Woodward J.R."/>
            <person name="Volckaert G."/>
            <person name="Aert R."/>
            <person name="Robben J."/>
            <person name="Grymonprez B."/>
            <person name="Weltjens I."/>
            <person name="Vanstreels E."/>
            <person name="Rieger M."/>
            <person name="Schaefer M."/>
            <person name="Mueller-Auer S."/>
            <person name="Gabel C."/>
            <person name="Fuchs M."/>
            <person name="Duesterhoeft A."/>
            <person name="Fritzc C."/>
            <person name="Holzer E."/>
            <person name="Moestl D."/>
            <person name="Hilbert H."/>
            <person name="Borzym K."/>
            <person name="Langer I."/>
            <person name="Beck A."/>
            <person name="Lehrach H."/>
            <person name="Reinhardt R."/>
            <person name="Pohl T.M."/>
            <person name="Eger P."/>
            <person name="Zimmermann W."/>
            <person name="Wedler H."/>
            <person name="Wambutt R."/>
            <person name="Purnelle B."/>
            <person name="Goffeau A."/>
            <person name="Cadieu E."/>
            <person name="Dreano S."/>
            <person name="Gloux S."/>
            <person name="Lelaure V."/>
            <person name="Mottier S."/>
            <person name="Galibert F."/>
            <person name="Aves S.J."/>
            <person name="Xiang Z."/>
            <person name="Hunt C."/>
            <person name="Moore K."/>
            <person name="Hurst S.M."/>
            <person name="Lucas M."/>
            <person name="Rochet M."/>
            <person name="Gaillardin C."/>
            <person name="Tallada V.A."/>
            <person name="Garzon A."/>
            <person name="Thode G."/>
            <person name="Daga R.R."/>
            <person name="Cruzado L."/>
            <person name="Jimenez J."/>
            <person name="Sanchez M."/>
            <person name="del Rey F."/>
            <person name="Benito J."/>
            <person name="Dominguez A."/>
            <person name="Revuelta J.L."/>
            <person name="Moreno S."/>
            <person name="Armstrong J."/>
            <person name="Forsburg S.L."/>
            <person name="Cerutti L."/>
            <person name="Lowe T."/>
            <person name="McCombie W.R."/>
            <person name="Paulsen I."/>
            <person name="Potashkin J."/>
            <person name="Shpakovski G.V."/>
            <person name="Ussery D."/>
            <person name="Barrell B.G."/>
            <person name="Nurse P."/>
        </authorList>
    </citation>
    <scope>NUCLEOTIDE SEQUENCE [LARGE SCALE GENOMIC DNA]</scope>
    <source>
        <strain>972 / ATCC 24843</strain>
    </source>
</reference>
<reference key="2">
    <citation type="journal article" date="2006" name="Nat. Biotechnol.">
        <title>ORFeome cloning and global analysis of protein localization in the fission yeast Schizosaccharomyces pombe.</title>
        <authorList>
            <person name="Matsuyama A."/>
            <person name="Arai R."/>
            <person name="Yashiroda Y."/>
            <person name="Shirai A."/>
            <person name="Kamata A."/>
            <person name="Sekido S."/>
            <person name="Kobayashi Y."/>
            <person name="Hashimoto A."/>
            <person name="Hamamoto M."/>
            <person name="Hiraoka Y."/>
            <person name="Horinouchi S."/>
            <person name="Yoshida M."/>
        </authorList>
    </citation>
    <scope>SUBCELLULAR LOCATION [LARGE SCALE ANALYSIS]</scope>
</reference>
<reference key="3">
    <citation type="journal article" date="2008" name="J. Proteome Res.">
        <title>Phosphoproteome analysis of fission yeast.</title>
        <authorList>
            <person name="Wilson-Grady J.T."/>
            <person name="Villen J."/>
            <person name="Gygi S.P."/>
        </authorList>
    </citation>
    <scope>PHOSPHORYLATION [LARGE SCALE ANALYSIS] AT SER-50</scope>
    <scope>IDENTIFICATION BY MASS SPECTROMETRY</scope>
</reference>
<keyword id="KW-0963">Cytoplasm</keyword>
<keyword id="KW-0268">Exocytosis</keyword>
<keyword id="KW-0597">Phosphoprotein</keyword>
<keyword id="KW-0653">Protein transport</keyword>
<keyword id="KW-1185">Reference proteome</keyword>
<keyword id="KW-0813">Transport</keyword>
<accession>O94598</accession>
<evidence type="ECO:0000250" key="1"/>
<evidence type="ECO:0000256" key="2">
    <source>
        <dbReference type="SAM" id="MobiDB-lite"/>
    </source>
</evidence>
<evidence type="ECO:0000269" key="3">
    <source>
    </source>
</evidence>
<evidence type="ECO:0000269" key="4">
    <source>
    </source>
</evidence>
<evidence type="ECO:0000305" key="5"/>